<accession>A5VQ20</accession>
<comment type="catalytic activity">
    <reaction evidence="1">
        <text>5-amino-1-(5-phospho-D-ribosyl)imidazole-4-carboxylate + L-aspartate + ATP = (2S)-2-[5-amino-1-(5-phospho-beta-D-ribosyl)imidazole-4-carboxamido]succinate + ADP + phosphate + 2 H(+)</text>
        <dbReference type="Rhea" id="RHEA:22628"/>
        <dbReference type="ChEBI" id="CHEBI:15378"/>
        <dbReference type="ChEBI" id="CHEBI:29991"/>
        <dbReference type="ChEBI" id="CHEBI:30616"/>
        <dbReference type="ChEBI" id="CHEBI:43474"/>
        <dbReference type="ChEBI" id="CHEBI:58443"/>
        <dbReference type="ChEBI" id="CHEBI:77657"/>
        <dbReference type="ChEBI" id="CHEBI:456216"/>
        <dbReference type="EC" id="6.3.2.6"/>
    </reaction>
</comment>
<comment type="pathway">
    <text evidence="1">Purine metabolism; IMP biosynthesis via de novo pathway; 5-amino-1-(5-phospho-D-ribosyl)imidazole-4-carboxamide from 5-amino-1-(5-phospho-D-ribosyl)imidazole-4-carboxylate: step 1/2.</text>
</comment>
<comment type="similarity">
    <text evidence="1">Belongs to the SAICAR synthetase family.</text>
</comment>
<protein>
    <recommendedName>
        <fullName evidence="1">Phosphoribosylaminoimidazole-succinocarboxamide synthase</fullName>
        <ecNumber evidence="1">6.3.2.6</ecNumber>
    </recommendedName>
    <alternativeName>
        <fullName evidence="1">SAICAR synthetase</fullName>
    </alternativeName>
</protein>
<feature type="chain" id="PRO_1000018677" description="Phosphoribosylaminoimidazole-succinocarboxamide synthase">
    <location>
        <begin position="1"/>
        <end position="254"/>
    </location>
</feature>
<dbReference type="EC" id="6.3.2.6" evidence="1"/>
<dbReference type="EMBL" id="CP000708">
    <property type="protein sequence ID" value="ABQ60090.1"/>
    <property type="molecule type" value="Genomic_DNA"/>
</dbReference>
<dbReference type="RefSeq" id="WP_004688254.1">
    <property type="nucleotide sequence ID" value="NC_009505.1"/>
</dbReference>
<dbReference type="SMR" id="A5VQ20"/>
<dbReference type="GeneID" id="97533857"/>
<dbReference type="KEGG" id="bov:BOV_0834"/>
<dbReference type="HOGENOM" id="CLU_061495_2_0_5"/>
<dbReference type="PhylomeDB" id="A5VQ20"/>
<dbReference type="UniPathway" id="UPA00074">
    <property type="reaction ID" value="UER00131"/>
</dbReference>
<dbReference type="Proteomes" id="UP000006383">
    <property type="component" value="Chromosome I"/>
</dbReference>
<dbReference type="GO" id="GO:0005829">
    <property type="term" value="C:cytosol"/>
    <property type="evidence" value="ECO:0007669"/>
    <property type="project" value="TreeGrafter"/>
</dbReference>
<dbReference type="GO" id="GO:0005524">
    <property type="term" value="F:ATP binding"/>
    <property type="evidence" value="ECO:0007669"/>
    <property type="project" value="UniProtKB-KW"/>
</dbReference>
<dbReference type="GO" id="GO:0004639">
    <property type="term" value="F:phosphoribosylaminoimidazolesuccinocarboxamide synthase activity"/>
    <property type="evidence" value="ECO:0007669"/>
    <property type="project" value="UniProtKB-UniRule"/>
</dbReference>
<dbReference type="GO" id="GO:0006189">
    <property type="term" value="P:'de novo' IMP biosynthetic process"/>
    <property type="evidence" value="ECO:0007669"/>
    <property type="project" value="UniProtKB-UniRule"/>
</dbReference>
<dbReference type="GO" id="GO:0009236">
    <property type="term" value="P:cobalamin biosynthetic process"/>
    <property type="evidence" value="ECO:0007669"/>
    <property type="project" value="InterPro"/>
</dbReference>
<dbReference type="CDD" id="cd01415">
    <property type="entry name" value="SAICAR_synt_PurC"/>
    <property type="match status" value="1"/>
</dbReference>
<dbReference type="FunFam" id="3.30.470.20:FF:000006">
    <property type="entry name" value="Phosphoribosylaminoimidazole-succinocarboxamide synthase"/>
    <property type="match status" value="1"/>
</dbReference>
<dbReference type="Gene3D" id="3.30.470.20">
    <property type="entry name" value="ATP-grasp fold, B domain"/>
    <property type="match status" value="1"/>
</dbReference>
<dbReference type="Gene3D" id="3.30.200.20">
    <property type="entry name" value="Phosphorylase Kinase, domain 1"/>
    <property type="match status" value="1"/>
</dbReference>
<dbReference type="HAMAP" id="MF_00137">
    <property type="entry name" value="SAICAR_synth"/>
    <property type="match status" value="1"/>
</dbReference>
<dbReference type="InterPro" id="IPR028923">
    <property type="entry name" value="SAICAR_synt/ADE2_N"/>
</dbReference>
<dbReference type="InterPro" id="IPR033934">
    <property type="entry name" value="SAICAR_synt_PurC"/>
</dbReference>
<dbReference type="InterPro" id="IPR001636">
    <property type="entry name" value="SAICAR_synth"/>
</dbReference>
<dbReference type="InterPro" id="IPR050089">
    <property type="entry name" value="SAICAR_synthetase"/>
</dbReference>
<dbReference type="InterPro" id="IPR018236">
    <property type="entry name" value="SAICAR_synthetase_CS"/>
</dbReference>
<dbReference type="NCBIfam" id="TIGR00081">
    <property type="entry name" value="purC"/>
    <property type="match status" value="1"/>
</dbReference>
<dbReference type="PANTHER" id="PTHR43599">
    <property type="entry name" value="MULTIFUNCTIONAL PROTEIN ADE2"/>
    <property type="match status" value="1"/>
</dbReference>
<dbReference type="PANTHER" id="PTHR43599:SF3">
    <property type="entry name" value="SI:DKEY-6E2.2"/>
    <property type="match status" value="1"/>
</dbReference>
<dbReference type="Pfam" id="PF01259">
    <property type="entry name" value="SAICAR_synt"/>
    <property type="match status" value="1"/>
</dbReference>
<dbReference type="SUPFAM" id="SSF56104">
    <property type="entry name" value="SAICAR synthase-like"/>
    <property type="match status" value="1"/>
</dbReference>
<dbReference type="PROSITE" id="PS01057">
    <property type="entry name" value="SAICAR_SYNTHETASE_1"/>
    <property type="match status" value="1"/>
</dbReference>
<organism>
    <name type="scientific">Brucella ovis (strain ATCC 25840 / 63/290 / NCTC 10512)</name>
    <dbReference type="NCBI Taxonomy" id="444178"/>
    <lineage>
        <taxon>Bacteria</taxon>
        <taxon>Pseudomonadati</taxon>
        <taxon>Pseudomonadota</taxon>
        <taxon>Alphaproteobacteria</taxon>
        <taxon>Hyphomicrobiales</taxon>
        <taxon>Brucellaceae</taxon>
        <taxon>Brucella/Ochrobactrum group</taxon>
        <taxon>Brucella</taxon>
    </lineage>
</organism>
<name>PUR7_BRUO2</name>
<gene>
    <name evidence="1" type="primary">purC</name>
    <name type="ordered locus">BOV_0834</name>
</gene>
<proteinExistence type="inferred from homology"/>
<reference key="1">
    <citation type="journal article" date="2009" name="PLoS ONE">
        <title>Genome degradation in Brucella ovis corresponds with narrowing of its host range and tissue tropism.</title>
        <authorList>
            <person name="Tsolis R.M."/>
            <person name="Seshadri R."/>
            <person name="Santos R.L."/>
            <person name="Sangari F.J."/>
            <person name="Lobo J.M."/>
            <person name="de Jong M.F."/>
            <person name="Ren Q."/>
            <person name="Myers G."/>
            <person name="Brinkac L.M."/>
            <person name="Nelson W.C."/>
            <person name="Deboy R.T."/>
            <person name="Angiuoli S."/>
            <person name="Khouri H."/>
            <person name="Dimitrov G."/>
            <person name="Robinson J.R."/>
            <person name="Mulligan S."/>
            <person name="Walker R.L."/>
            <person name="Elzer P.E."/>
            <person name="Hassan K.A."/>
            <person name="Paulsen I.T."/>
        </authorList>
    </citation>
    <scope>NUCLEOTIDE SEQUENCE [LARGE SCALE GENOMIC DNA]</scope>
    <source>
        <strain>ATCC 25840 / 63/290 / NCTC 10512</strain>
    </source>
</reference>
<keyword id="KW-0067">ATP-binding</keyword>
<keyword id="KW-0436">Ligase</keyword>
<keyword id="KW-0547">Nucleotide-binding</keyword>
<keyword id="KW-0658">Purine biosynthesis</keyword>
<sequence length="254" mass="28956">MNRRRRIYEGKAKILYEGPEPGTLVQFFKDDATAFNAKKHEVIDGKGVLNNRISEHIFTQLNRIGIPTHFIRRLNMREQLIKEVEIIPLEVVVRNVAAGSLAKRLGLEEGTILPRSIIEFYYKADALDDPMVTEEHITAFGWASPQEIDDIMALAIRVNDFLTGLFLGIGIQLVDFKMECGRLWEGDMMRIVVADEISPDSARLWDITTNDKLDKDRFRRDMGGLVEAYQEVARRLGIMNENDTPRPSGPTLVK</sequence>
<evidence type="ECO:0000255" key="1">
    <source>
        <dbReference type="HAMAP-Rule" id="MF_00137"/>
    </source>
</evidence>